<comment type="similarity">
    <text evidence="1">Belongs to the bacterial ribosomal protein bL33 family.</text>
</comment>
<protein>
    <recommendedName>
        <fullName evidence="1">Large ribosomal subunit protein bL33B</fullName>
    </recommendedName>
    <alternativeName>
        <fullName evidence="1">50S ribosomal protein L33 2</fullName>
    </alternativeName>
</protein>
<accession>Q1B2Q0</accession>
<dbReference type="EMBL" id="CP000384">
    <property type="protein sequence ID" value="ABG10834.1"/>
    <property type="molecule type" value="Genomic_DNA"/>
</dbReference>
<dbReference type="SMR" id="Q1B2Q0"/>
<dbReference type="KEGG" id="mmc:Mmcs_4730"/>
<dbReference type="HOGENOM" id="CLU_190949_1_1_11"/>
<dbReference type="BioCyc" id="MSP164756:G1G6O-4832-MONOMER"/>
<dbReference type="GO" id="GO:0022625">
    <property type="term" value="C:cytosolic large ribosomal subunit"/>
    <property type="evidence" value="ECO:0007669"/>
    <property type="project" value="TreeGrafter"/>
</dbReference>
<dbReference type="GO" id="GO:0003735">
    <property type="term" value="F:structural constituent of ribosome"/>
    <property type="evidence" value="ECO:0007669"/>
    <property type="project" value="InterPro"/>
</dbReference>
<dbReference type="GO" id="GO:0006412">
    <property type="term" value="P:translation"/>
    <property type="evidence" value="ECO:0007669"/>
    <property type="project" value="UniProtKB-UniRule"/>
</dbReference>
<dbReference type="FunFam" id="2.20.28.120:FF:000002">
    <property type="entry name" value="50S ribosomal protein L33"/>
    <property type="match status" value="1"/>
</dbReference>
<dbReference type="Gene3D" id="2.20.28.120">
    <property type="entry name" value="Ribosomal protein L33"/>
    <property type="match status" value="1"/>
</dbReference>
<dbReference type="HAMAP" id="MF_00294">
    <property type="entry name" value="Ribosomal_bL33"/>
    <property type="match status" value="1"/>
</dbReference>
<dbReference type="InterPro" id="IPR001705">
    <property type="entry name" value="Ribosomal_bL33"/>
</dbReference>
<dbReference type="InterPro" id="IPR038584">
    <property type="entry name" value="Ribosomal_bL33_sf"/>
</dbReference>
<dbReference type="InterPro" id="IPR011332">
    <property type="entry name" value="Ribosomal_zn-bd"/>
</dbReference>
<dbReference type="NCBIfam" id="NF001860">
    <property type="entry name" value="PRK00595.1"/>
    <property type="match status" value="1"/>
</dbReference>
<dbReference type="NCBIfam" id="TIGR01023">
    <property type="entry name" value="rpmG_bact"/>
    <property type="match status" value="1"/>
</dbReference>
<dbReference type="PANTHER" id="PTHR15238">
    <property type="entry name" value="54S RIBOSOMAL PROTEIN L39, MITOCHONDRIAL"/>
    <property type="match status" value="1"/>
</dbReference>
<dbReference type="PANTHER" id="PTHR15238:SF1">
    <property type="entry name" value="LARGE RIBOSOMAL SUBUNIT PROTEIN BL33M"/>
    <property type="match status" value="1"/>
</dbReference>
<dbReference type="Pfam" id="PF00471">
    <property type="entry name" value="Ribosomal_L33"/>
    <property type="match status" value="1"/>
</dbReference>
<dbReference type="SUPFAM" id="SSF57829">
    <property type="entry name" value="Zn-binding ribosomal proteins"/>
    <property type="match status" value="1"/>
</dbReference>
<sequence length="54" mass="6516">MARNEIRPIVKLRSTAGTGYTYVTRKNRRNDPDRLMLKKCDPVVRRHVDFREER</sequence>
<name>RL332_MYCSS</name>
<feature type="chain" id="PRO_0000356561" description="Large ribosomal subunit protein bL33B">
    <location>
        <begin position="1"/>
        <end position="54"/>
    </location>
</feature>
<organism>
    <name type="scientific">Mycobacterium sp. (strain MCS)</name>
    <dbReference type="NCBI Taxonomy" id="164756"/>
    <lineage>
        <taxon>Bacteria</taxon>
        <taxon>Bacillati</taxon>
        <taxon>Actinomycetota</taxon>
        <taxon>Actinomycetes</taxon>
        <taxon>Mycobacteriales</taxon>
        <taxon>Mycobacteriaceae</taxon>
        <taxon>Mycobacterium</taxon>
    </lineage>
</organism>
<gene>
    <name evidence="1" type="primary">rpmG2</name>
    <name type="ordered locus">Mmcs_4730</name>
</gene>
<proteinExistence type="inferred from homology"/>
<reference key="1">
    <citation type="submission" date="2006-06" db="EMBL/GenBank/DDBJ databases">
        <title>Complete sequence of chromosome of Mycobacterium sp. MCS.</title>
        <authorList>
            <consortium name="US DOE Joint Genome Institute"/>
            <person name="Copeland A."/>
            <person name="Lucas S."/>
            <person name="Lapidus A."/>
            <person name="Barry K."/>
            <person name="Detter J.C."/>
            <person name="Glavina del Rio T."/>
            <person name="Hammon N."/>
            <person name="Israni S."/>
            <person name="Dalin E."/>
            <person name="Tice H."/>
            <person name="Pitluck S."/>
            <person name="Martinez M."/>
            <person name="Schmutz J."/>
            <person name="Larimer F."/>
            <person name="Land M."/>
            <person name="Hauser L."/>
            <person name="Kyrpides N."/>
            <person name="Kim E."/>
            <person name="Miller C.D."/>
            <person name="Hughes J.E."/>
            <person name="Anderson A.J."/>
            <person name="Sims R.C."/>
            <person name="Richardson P."/>
        </authorList>
    </citation>
    <scope>NUCLEOTIDE SEQUENCE [LARGE SCALE GENOMIC DNA]</scope>
    <source>
        <strain>MCS</strain>
    </source>
</reference>
<keyword id="KW-0687">Ribonucleoprotein</keyword>
<keyword id="KW-0689">Ribosomal protein</keyword>
<evidence type="ECO:0000255" key="1">
    <source>
        <dbReference type="HAMAP-Rule" id="MF_00294"/>
    </source>
</evidence>